<proteinExistence type="inferred from homology"/>
<comment type="function">
    <text evidence="2">Component of the DASH complex that connects microtubules with kinetochores and couples microtubule depolymerisation to chromosome movement; it is involved in retrieving kinetochores to the spindle poles before their re-orientation on the spindle in early mitosis and allows microtubule depolymerization to pull chromosomes apart and resist detachment during anaphase. Kinetochores, consisting of a centromere-associated inner segment and a microtubule-contacting outer segment, play a crucial role in chromosome segregation by mediating the physical connection between centromeric DNA and microtubules. Kinetochores also serve as an input point for the spindle assembly checkpoint, which delays anaphase until all chromosomes have bioriented on the mitotic spindle.</text>
</comment>
<comment type="subunit">
    <text evidence="1 2">Component of the DASH complex consisting of ASK1, DAD1, DAD2, DAD3, DAD4, DAM1, DUO1, HSK3, SPC19 and SPC34, with a stoichiometry of one copy of each subunit per complex. Multiple DASH complexes oligomerize to form a ring that encircles spindle microtubules and organizes the rod-like NDC80 complexes of the outer kinetochore. DASH complex oligomerization strengthens microtubule attachments (By similarity). On cytoplasmic microtubules, DASH complexes appear to form patches instead of rings (By similarity).</text>
</comment>
<comment type="subcellular location">
    <subcellularLocation>
        <location evidence="2">Nucleus</location>
    </subcellularLocation>
    <subcellularLocation>
        <location evidence="2">Cytoplasm</location>
        <location evidence="2">Cytoskeleton</location>
        <location evidence="2">Spindle</location>
    </subcellularLocation>
    <subcellularLocation>
        <location evidence="2">Chromosome</location>
        <location evidence="2">Centromere</location>
        <location evidence="2">Kinetochore</location>
    </subcellularLocation>
</comment>
<comment type="similarity">
    <text evidence="4">Belongs to the DASH complex SPC34 family.</text>
</comment>
<sequence>MGESMNSCLEEINGCLDSITSLYFKPPGIFHNAMIRISKDGKETHTLNDKIKNLIKGCDPKEETTLFQLDPVTKSLRRKDGRQALFDYLDKRDLNMKRNRRLGHKDEKPVIHVPNEFYIREHDEELLRDSQRTKRFKAAGHGNDIDSNNTNNTTTALITELFNDDVGLMATMRKKFKENDEIKNLLMALQKGSVILDEKEGISTNNRRRTLFVEDFSTESILKLLDAVLEMFPTEEYKKAAEQYHDVFQELNEESEKLLAEIQLQKDEIEGRLKIESSKDSTTGVQKLIEKERQKIAELESQLRISN</sequence>
<organism>
    <name type="scientific">Candida glabrata (strain ATCC 2001 / BCRC 20586 / JCM 3761 / NBRC 0622 / NRRL Y-65 / CBS 138)</name>
    <name type="common">Yeast</name>
    <name type="synonym">Nakaseomyces glabratus</name>
    <dbReference type="NCBI Taxonomy" id="284593"/>
    <lineage>
        <taxon>Eukaryota</taxon>
        <taxon>Fungi</taxon>
        <taxon>Dikarya</taxon>
        <taxon>Ascomycota</taxon>
        <taxon>Saccharomycotina</taxon>
        <taxon>Saccharomycetes</taxon>
        <taxon>Saccharomycetales</taxon>
        <taxon>Saccharomycetaceae</taxon>
        <taxon>Nakaseomyces</taxon>
    </lineage>
</organism>
<feature type="chain" id="PRO_0000211551" description="DASH complex subunit SPC34">
    <location>
        <begin position="1"/>
        <end position="307"/>
    </location>
</feature>
<feature type="coiled-coil region" evidence="3">
    <location>
        <begin position="234"/>
        <end position="307"/>
    </location>
</feature>
<protein>
    <recommendedName>
        <fullName>DASH complex subunit SPC34</fullName>
    </recommendedName>
    <alternativeName>
        <fullName>Outer kinetochore protein SPC34</fullName>
    </alternativeName>
</protein>
<evidence type="ECO:0000250" key="1">
    <source>
        <dbReference type="UniProtKB" id="O14285"/>
    </source>
</evidence>
<evidence type="ECO:0000250" key="2">
    <source>
        <dbReference type="UniProtKB" id="P36131"/>
    </source>
</evidence>
<evidence type="ECO:0000255" key="3"/>
<evidence type="ECO:0000305" key="4"/>
<gene>
    <name type="primary">SPC34</name>
    <name type="ordered locus">CAGL0L03223g</name>
</gene>
<dbReference type="EMBL" id="CR380958">
    <property type="protein sequence ID" value="CAG61882.1"/>
    <property type="molecule type" value="Genomic_DNA"/>
</dbReference>
<dbReference type="RefSeq" id="XP_448912.1">
    <property type="nucleotide sequence ID" value="XM_448912.1"/>
</dbReference>
<dbReference type="SMR" id="Q6FLI2"/>
<dbReference type="FunCoup" id="Q6FLI2">
    <property type="interactions" value="45"/>
</dbReference>
<dbReference type="STRING" id="284593.Q6FLI2"/>
<dbReference type="EnsemblFungi" id="CAGL0L03223g-T">
    <property type="protein sequence ID" value="CAGL0L03223g-T-p1"/>
    <property type="gene ID" value="CAGL0L03223g"/>
</dbReference>
<dbReference type="KEGG" id="cgr:2890851"/>
<dbReference type="CGD" id="CAL0135020">
    <property type="gene designation" value="CAGL0L03223g"/>
</dbReference>
<dbReference type="VEuPathDB" id="FungiDB:CAGL0L03223g"/>
<dbReference type="eggNOG" id="ENOG502QSS0">
    <property type="taxonomic scope" value="Eukaryota"/>
</dbReference>
<dbReference type="HOGENOM" id="CLU_970457_0_0_1"/>
<dbReference type="InParanoid" id="Q6FLI2"/>
<dbReference type="OMA" id="LIRDCNP"/>
<dbReference type="Proteomes" id="UP000002428">
    <property type="component" value="Chromosome L"/>
</dbReference>
<dbReference type="GO" id="GO:0005737">
    <property type="term" value="C:cytoplasm"/>
    <property type="evidence" value="ECO:0007669"/>
    <property type="project" value="UniProtKB-KW"/>
</dbReference>
<dbReference type="GO" id="GO:0042729">
    <property type="term" value="C:DASH complex"/>
    <property type="evidence" value="ECO:0000250"/>
    <property type="project" value="UniProtKB"/>
</dbReference>
<dbReference type="GO" id="GO:0005876">
    <property type="term" value="C:spindle microtubule"/>
    <property type="evidence" value="ECO:0007669"/>
    <property type="project" value="InterPro"/>
</dbReference>
<dbReference type="GO" id="GO:0051010">
    <property type="term" value="F:microtubule plus-end binding"/>
    <property type="evidence" value="ECO:0007669"/>
    <property type="project" value="EnsemblFungi"/>
</dbReference>
<dbReference type="GO" id="GO:0008608">
    <property type="term" value="P:attachment of spindle microtubules to kinetochore"/>
    <property type="evidence" value="ECO:0000250"/>
    <property type="project" value="UniProtKB"/>
</dbReference>
<dbReference type="GO" id="GO:0051301">
    <property type="term" value="P:cell division"/>
    <property type="evidence" value="ECO:0007669"/>
    <property type="project" value="UniProtKB-KW"/>
</dbReference>
<dbReference type="GO" id="GO:1990758">
    <property type="term" value="P:mitotic sister chromatid biorientation"/>
    <property type="evidence" value="ECO:0000250"/>
    <property type="project" value="UniProtKB"/>
</dbReference>
<dbReference type="GO" id="GO:0051987">
    <property type="term" value="P:positive regulation of attachment of spindle microtubules to kinetochore"/>
    <property type="evidence" value="ECO:0007669"/>
    <property type="project" value="EnsemblFungi"/>
</dbReference>
<dbReference type="GO" id="GO:0031116">
    <property type="term" value="P:positive regulation of microtubule polymerization"/>
    <property type="evidence" value="ECO:0007669"/>
    <property type="project" value="EnsemblFungi"/>
</dbReference>
<dbReference type="GO" id="GO:1990976">
    <property type="term" value="P:protein transport along microtubule to mitotic spindle pole body"/>
    <property type="evidence" value="ECO:0000250"/>
    <property type="project" value="UniProtKB"/>
</dbReference>
<dbReference type="InterPro" id="IPR013966">
    <property type="entry name" value="Spc34"/>
</dbReference>
<dbReference type="Pfam" id="PF08657">
    <property type="entry name" value="DASH_Spc34"/>
    <property type="match status" value="1"/>
</dbReference>
<accession>Q6FLI2</accession>
<keyword id="KW-0131">Cell cycle</keyword>
<keyword id="KW-0132">Cell division</keyword>
<keyword id="KW-0137">Centromere</keyword>
<keyword id="KW-0158">Chromosome</keyword>
<keyword id="KW-0159">Chromosome partition</keyword>
<keyword id="KW-0175">Coiled coil</keyword>
<keyword id="KW-0963">Cytoplasm</keyword>
<keyword id="KW-0206">Cytoskeleton</keyword>
<keyword id="KW-0995">Kinetochore</keyword>
<keyword id="KW-0493">Microtubule</keyword>
<keyword id="KW-0498">Mitosis</keyword>
<keyword id="KW-0539">Nucleus</keyword>
<keyword id="KW-1185">Reference proteome</keyword>
<name>SPC34_CANGA</name>
<reference key="1">
    <citation type="journal article" date="2004" name="Nature">
        <title>Genome evolution in yeasts.</title>
        <authorList>
            <person name="Dujon B."/>
            <person name="Sherman D."/>
            <person name="Fischer G."/>
            <person name="Durrens P."/>
            <person name="Casaregola S."/>
            <person name="Lafontaine I."/>
            <person name="de Montigny J."/>
            <person name="Marck C."/>
            <person name="Neuveglise C."/>
            <person name="Talla E."/>
            <person name="Goffard N."/>
            <person name="Frangeul L."/>
            <person name="Aigle M."/>
            <person name="Anthouard V."/>
            <person name="Babour A."/>
            <person name="Barbe V."/>
            <person name="Barnay S."/>
            <person name="Blanchin S."/>
            <person name="Beckerich J.-M."/>
            <person name="Beyne E."/>
            <person name="Bleykasten C."/>
            <person name="Boisrame A."/>
            <person name="Boyer J."/>
            <person name="Cattolico L."/>
            <person name="Confanioleri F."/>
            <person name="de Daruvar A."/>
            <person name="Despons L."/>
            <person name="Fabre E."/>
            <person name="Fairhead C."/>
            <person name="Ferry-Dumazet H."/>
            <person name="Groppi A."/>
            <person name="Hantraye F."/>
            <person name="Hennequin C."/>
            <person name="Jauniaux N."/>
            <person name="Joyet P."/>
            <person name="Kachouri R."/>
            <person name="Kerrest A."/>
            <person name="Koszul R."/>
            <person name="Lemaire M."/>
            <person name="Lesur I."/>
            <person name="Ma L."/>
            <person name="Muller H."/>
            <person name="Nicaud J.-M."/>
            <person name="Nikolski M."/>
            <person name="Oztas S."/>
            <person name="Ozier-Kalogeropoulos O."/>
            <person name="Pellenz S."/>
            <person name="Potier S."/>
            <person name="Richard G.-F."/>
            <person name="Straub M.-L."/>
            <person name="Suleau A."/>
            <person name="Swennen D."/>
            <person name="Tekaia F."/>
            <person name="Wesolowski-Louvel M."/>
            <person name="Westhof E."/>
            <person name="Wirth B."/>
            <person name="Zeniou-Meyer M."/>
            <person name="Zivanovic Y."/>
            <person name="Bolotin-Fukuhara M."/>
            <person name="Thierry A."/>
            <person name="Bouchier C."/>
            <person name="Caudron B."/>
            <person name="Scarpelli C."/>
            <person name="Gaillardin C."/>
            <person name="Weissenbach J."/>
            <person name="Wincker P."/>
            <person name="Souciet J.-L."/>
        </authorList>
    </citation>
    <scope>NUCLEOTIDE SEQUENCE [LARGE SCALE GENOMIC DNA]</scope>
    <source>
        <strain>ATCC 2001 / BCRC 20586 / JCM 3761 / NBRC 0622 / NRRL Y-65 / CBS 138</strain>
    </source>
</reference>